<proteinExistence type="inferred from homology"/>
<feature type="chain" id="PRO_0000232622" description="Small ribosomal subunit protein uS17c">
    <location>
        <begin position="1"/>
        <end position="82"/>
    </location>
</feature>
<geneLocation type="chloroplast"/>
<sequence>MKKLLGLVVSCRMQKTVIVEVKTQVKHALYGKRIMKKKRYAVHDPEKKASLGELIWIRTCRPISKTKKWIYDSSANASQSSR</sequence>
<evidence type="ECO:0000250" key="1"/>
<evidence type="ECO:0000305" key="2"/>
<gene>
    <name type="primary">rps17</name>
</gene>
<name>RR17_CYAM1</name>
<comment type="function">
    <text evidence="1">One of the primary rRNA binding proteins, it binds specifically to the 5'-end of 16S ribosomal RNA.</text>
</comment>
<comment type="subunit">
    <text evidence="1">Part of the 30S ribosomal subunit.</text>
</comment>
<comment type="subcellular location">
    <subcellularLocation>
        <location>Plastid</location>
        <location>Chloroplast</location>
    </subcellularLocation>
</comment>
<comment type="similarity">
    <text evidence="2">Belongs to the universal ribosomal protein uS17 family.</text>
</comment>
<dbReference type="EMBL" id="AB002583">
    <property type="protein sequence ID" value="BAC76240.1"/>
    <property type="molecule type" value="Genomic_DNA"/>
</dbReference>
<dbReference type="RefSeq" id="NP_849078.1">
    <property type="nucleotide sequence ID" value="NC_004799.1"/>
</dbReference>
<dbReference type="SMR" id="Q85FV4"/>
<dbReference type="STRING" id="280699.Q85FV4"/>
<dbReference type="EnsemblPlants" id="CMV173CT">
    <property type="protein sequence ID" value="CMV173CT"/>
    <property type="gene ID" value="CMV173C"/>
</dbReference>
<dbReference type="GeneID" id="845005"/>
<dbReference type="Gramene" id="CMV173CT">
    <property type="protein sequence ID" value="CMV173CT"/>
    <property type="gene ID" value="CMV173C"/>
</dbReference>
<dbReference type="KEGG" id="cme:CymeCp146"/>
<dbReference type="HOGENOM" id="CLU_073626_1_1_1"/>
<dbReference type="Proteomes" id="UP000007014">
    <property type="component" value="Chloroplast"/>
</dbReference>
<dbReference type="GO" id="GO:0009507">
    <property type="term" value="C:chloroplast"/>
    <property type="evidence" value="ECO:0007669"/>
    <property type="project" value="UniProtKB-SubCell"/>
</dbReference>
<dbReference type="GO" id="GO:0022627">
    <property type="term" value="C:cytosolic small ribosomal subunit"/>
    <property type="evidence" value="ECO:0007669"/>
    <property type="project" value="TreeGrafter"/>
</dbReference>
<dbReference type="GO" id="GO:0019843">
    <property type="term" value="F:rRNA binding"/>
    <property type="evidence" value="ECO:0007669"/>
    <property type="project" value="UniProtKB-UniRule"/>
</dbReference>
<dbReference type="GO" id="GO:0003735">
    <property type="term" value="F:structural constituent of ribosome"/>
    <property type="evidence" value="ECO:0007669"/>
    <property type="project" value="InterPro"/>
</dbReference>
<dbReference type="GO" id="GO:0006412">
    <property type="term" value="P:translation"/>
    <property type="evidence" value="ECO:0007669"/>
    <property type="project" value="UniProtKB-UniRule"/>
</dbReference>
<dbReference type="CDD" id="cd00364">
    <property type="entry name" value="Ribosomal_uS17"/>
    <property type="match status" value="1"/>
</dbReference>
<dbReference type="Gene3D" id="2.40.50.140">
    <property type="entry name" value="Nucleic acid-binding proteins"/>
    <property type="match status" value="1"/>
</dbReference>
<dbReference type="HAMAP" id="MF_01345_B">
    <property type="entry name" value="Ribosomal_uS17_B"/>
    <property type="match status" value="1"/>
</dbReference>
<dbReference type="InterPro" id="IPR012340">
    <property type="entry name" value="NA-bd_OB-fold"/>
</dbReference>
<dbReference type="InterPro" id="IPR000266">
    <property type="entry name" value="Ribosomal_uS17"/>
</dbReference>
<dbReference type="InterPro" id="IPR019984">
    <property type="entry name" value="Ribosomal_uS17_bact/chlr"/>
</dbReference>
<dbReference type="NCBIfam" id="NF004123">
    <property type="entry name" value="PRK05610.1"/>
    <property type="match status" value="1"/>
</dbReference>
<dbReference type="NCBIfam" id="TIGR03635">
    <property type="entry name" value="uS17_bact"/>
    <property type="match status" value="1"/>
</dbReference>
<dbReference type="PANTHER" id="PTHR10744">
    <property type="entry name" value="40S RIBOSOMAL PROTEIN S11 FAMILY MEMBER"/>
    <property type="match status" value="1"/>
</dbReference>
<dbReference type="PANTHER" id="PTHR10744:SF1">
    <property type="entry name" value="SMALL RIBOSOMAL SUBUNIT PROTEIN US17M"/>
    <property type="match status" value="1"/>
</dbReference>
<dbReference type="Pfam" id="PF00366">
    <property type="entry name" value="Ribosomal_S17"/>
    <property type="match status" value="1"/>
</dbReference>
<dbReference type="PRINTS" id="PR00973">
    <property type="entry name" value="RIBOSOMALS17"/>
</dbReference>
<dbReference type="SUPFAM" id="SSF50249">
    <property type="entry name" value="Nucleic acid-binding proteins"/>
    <property type="match status" value="1"/>
</dbReference>
<keyword id="KW-0150">Chloroplast</keyword>
<keyword id="KW-0934">Plastid</keyword>
<keyword id="KW-1185">Reference proteome</keyword>
<keyword id="KW-0687">Ribonucleoprotein</keyword>
<keyword id="KW-0689">Ribosomal protein</keyword>
<keyword id="KW-0694">RNA-binding</keyword>
<keyword id="KW-0699">rRNA-binding</keyword>
<accession>Q85FV4</accession>
<protein>
    <recommendedName>
        <fullName evidence="2">Small ribosomal subunit protein uS17c</fullName>
    </recommendedName>
    <alternativeName>
        <fullName>30S ribosomal protein S17, chloroplastic</fullName>
    </alternativeName>
</protein>
<organism>
    <name type="scientific">Cyanidioschyzon merolae (strain NIES-3377 / 10D)</name>
    <name type="common">Unicellular red alga</name>
    <dbReference type="NCBI Taxonomy" id="280699"/>
    <lineage>
        <taxon>Eukaryota</taxon>
        <taxon>Rhodophyta</taxon>
        <taxon>Bangiophyceae</taxon>
        <taxon>Cyanidiales</taxon>
        <taxon>Cyanidiaceae</taxon>
        <taxon>Cyanidioschyzon</taxon>
    </lineage>
</organism>
<reference key="1">
    <citation type="journal article" date="2003" name="DNA Res.">
        <title>Complete sequence and analysis of the plastid genome of the unicellular red alga Cyanidioschyzon merolae.</title>
        <authorList>
            <person name="Ohta N."/>
            <person name="Matsuzaki M."/>
            <person name="Misumi O."/>
            <person name="Miyagishima S.-Y."/>
            <person name="Nozaki H."/>
            <person name="Tanaka K."/>
            <person name="Shin-i T."/>
            <person name="Kohara Y."/>
            <person name="Kuroiwa T."/>
        </authorList>
    </citation>
    <scope>NUCLEOTIDE SEQUENCE [LARGE SCALE GENOMIC DNA]</scope>
    <source>
        <strain>NIES-3377 / 10D</strain>
    </source>
</reference>